<proteinExistence type="inferred from homology"/>
<feature type="chain" id="PRO_0000366780" description="Ribosomal RNA large subunit methyltransferase K/L">
    <location>
        <begin position="1"/>
        <end position="712"/>
    </location>
</feature>
<feature type="domain" description="THUMP" evidence="1">
    <location>
        <begin position="43"/>
        <end position="154"/>
    </location>
</feature>
<reference key="1">
    <citation type="journal article" date="2005" name="Science">
        <title>Life at depth: Photobacterium profundum genome sequence and expression analysis.</title>
        <authorList>
            <person name="Vezzi A."/>
            <person name="Campanaro S."/>
            <person name="D'Angelo M."/>
            <person name="Simonato F."/>
            <person name="Vitulo N."/>
            <person name="Lauro F.M."/>
            <person name="Cestaro A."/>
            <person name="Malacrida G."/>
            <person name="Simionati B."/>
            <person name="Cannata N."/>
            <person name="Romualdi C."/>
            <person name="Bartlett D.H."/>
            <person name="Valle G."/>
        </authorList>
    </citation>
    <scope>NUCLEOTIDE SEQUENCE [LARGE SCALE GENOMIC DNA]</scope>
    <source>
        <strain>ATCC BAA-1253 / SS9</strain>
    </source>
</reference>
<protein>
    <recommendedName>
        <fullName evidence="1">Ribosomal RNA large subunit methyltransferase K/L</fullName>
    </recommendedName>
    <domain>
        <recommendedName>
            <fullName evidence="1">23S rRNA m2G2445 methyltransferase</fullName>
            <ecNumber evidence="1">2.1.1.173</ecNumber>
        </recommendedName>
        <alternativeName>
            <fullName evidence="1">rRNA (guanine-N(2)-)-methyltransferase RlmL</fullName>
        </alternativeName>
    </domain>
    <domain>
        <recommendedName>
            <fullName evidence="1">23S rRNA m7G2069 methyltransferase</fullName>
            <ecNumber evidence="1">2.1.1.264</ecNumber>
        </recommendedName>
        <alternativeName>
            <fullName evidence="1">rRNA (guanine-N(7)-)-methyltransferase RlmK</fullName>
        </alternativeName>
    </domain>
</protein>
<evidence type="ECO:0000255" key="1">
    <source>
        <dbReference type="HAMAP-Rule" id="MF_01858"/>
    </source>
</evidence>
<comment type="function">
    <text evidence="1">Specifically methylates the guanine in position 2445 (m2G2445) and the guanine in position 2069 (m7G2069) of 23S rRNA.</text>
</comment>
<comment type="catalytic activity">
    <reaction evidence="1">
        <text>guanosine(2445) in 23S rRNA + S-adenosyl-L-methionine = N(2)-methylguanosine(2445) in 23S rRNA + S-adenosyl-L-homocysteine + H(+)</text>
        <dbReference type="Rhea" id="RHEA:42740"/>
        <dbReference type="Rhea" id="RHEA-COMP:10215"/>
        <dbReference type="Rhea" id="RHEA-COMP:10216"/>
        <dbReference type="ChEBI" id="CHEBI:15378"/>
        <dbReference type="ChEBI" id="CHEBI:57856"/>
        <dbReference type="ChEBI" id="CHEBI:59789"/>
        <dbReference type="ChEBI" id="CHEBI:74269"/>
        <dbReference type="ChEBI" id="CHEBI:74481"/>
        <dbReference type="EC" id="2.1.1.173"/>
    </reaction>
</comment>
<comment type="catalytic activity">
    <reaction evidence="1">
        <text>guanosine(2069) in 23S rRNA + S-adenosyl-L-methionine = N(2)-methylguanosine(2069) in 23S rRNA + S-adenosyl-L-homocysteine + H(+)</text>
        <dbReference type="Rhea" id="RHEA:43772"/>
        <dbReference type="Rhea" id="RHEA-COMP:10688"/>
        <dbReference type="Rhea" id="RHEA-COMP:10689"/>
        <dbReference type="ChEBI" id="CHEBI:15378"/>
        <dbReference type="ChEBI" id="CHEBI:57856"/>
        <dbReference type="ChEBI" id="CHEBI:59789"/>
        <dbReference type="ChEBI" id="CHEBI:74269"/>
        <dbReference type="ChEBI" id="CHEBI:74481"/>
        <dbReference type="EC" id="2.1.1.264"/>
    </reaction>
</comment>
<comment type="subcellular location">
    <subcellularLocation>
        <location evidence="1">Cytoplasm</location>
    </subcellularLocation>
</comment>
<comment type="similarity">
    <text evidence="1">Belongs to the methyltransferase superfamily. RlmKL family.</text>
</comment>
<dbReference type="EC" id="2.1.1.173" evidence="1"/>
<dbReference type="EC" id="2.1.1.264" evidence="1"/>
<dbReference type="EMBL" id="CR378668">
    <property type="protein sequence ID" value="CAG20176.1"/>
    <property type="molecule type" value="Genomic_DNA"/>
</dbReference>
<dbReference type="RefSeq" id="WP_011218484.1">
    <property type="nucleotide sequence ID" value="NC_006370.1"/>
</dbReference>
<dbReference type="SMR" id="Q6LRA0"/>
<dbReference type="STRING" id="298386.PBPRA1769"/>
<dbReference type="KEGG" id="ppr:PBPRA1769"/>
<dbReference type="eggNOG" id="COG0116">
    <property type="taxonomic scope" value="Bacteria"/>
</dbReference>
<dbReference type="eggNOG" id="COG1092">
    <property type="taxonomic scope" value="Bacteria"/>
</dbReference>
<dbReference type="HOGENOM" id="CLU_014042_2_0_6"/>
<dbReference type="Proteomes" id="UP000000593">
    <property type="component" value="Chromosome 1"/>
</dbReference>
<dbReference type="GO" id="GO:0005737">
    <property type="term" value="C:cytoplasm"/>
    <property type="evidence" value="ECO:0007669"/>
    <property type="project" value="UniProtKB-SubCell"/>
</dbReference>
<dbReference type="GO" id="GO:0052915">
    <property type="term" value="F:23S rRNA (guanine(2445)-N(2))-methyltransferase activity"/>
    <property type="evidence" value="ECO:0007669"/>
    <property type="project" value="UniProtKB-UniRule"/>
</dbReference>
<dbReference type="GO" id="GO:0003723">
    <property type="term" value="F:RNA binding"/>
    <property type="evidence" value="ECO:0007669"/>
    <property type="project" value="UniProtKB-KW"/>
</dbReference>
<dbReference type="GO" id="GO:0070043">
    <property type="term" value="F:rRNA (guanine-N7-)-methyltransferase activity"/>
    <property type="evidence" value="ECO:0007669"/>
    <property type="project" value="UniProtKB-UniRule"/>
</dbReference>
<dbReference type="CDD" id="cd02440">
    <property type="entry name" value="AdoMet_MTases"/>
    <property type="match status" value="1"/>
</dbReference>
<dbReference type="CDD" id="cd11715">
    <property type="entry name" value="THUMP_AdoMetMT"/>
    <property type="match status" value="1"/>
</dbReference>
<dbReference type="FunFam" id="3.40.50.150:FF:000039">
    <property type="entry name" value="Ribosomal RNA large subunit methyltransferase K/L"/>
    <property type="match status" value="1"/>
</dbReference>
<dbReference type="Gene3D" id="3.30.2130.30">
    <property type="match status" value="1"/>
</dbReference>
<dbReference type="Gene3D" id="3.30.750.80">
    <property type="entry name" value="RNA methyltransferase domain (HRMD) like"/>
    <property type="match status" value="1"/>
</dbReference>
<dbReference type="Gene3D" id="3.40.50.150">
    <property type="entry name" value="Vaccinia Virus protein VP39"/>
    <property type="match status" value="2"/>
</dbReference>
<dbReference type="HAMAP" id="MF_01858">
    <property type="entry name" value="23SrRNA_methyltr_KL"/>
    <property type="match status" value="1"/>
</dbReference>
<dbReference type="InterPro" id="IPR017244">
    <property type="entry name" value="23SrRNA_methyltr_KL"/>
</dbReference>
<dbReference type="InterPro" id="IPR002052">
    <property type="entry name" value="DNA_methylase_N6_adenine_CS"/>
</dbReference>
<dbReference type="InterPro" id="IPR000241">
    <property type="entry name" value="RlmKL-like_Mtase"/>
</dbReference>
<dbReference type="InterPro" id="IPR053943">
    <property type="entry name" value="RlmKL-like_Mtase_CS"/>
</dbReference>
<dbReference type="InterPro" id="IPR054170">
    <property type="entry name" value="RlmL_1st"/>
</dbReference>
<dbReference type="InterPro" id="IPR019614">
    <property type="entry name" value="SAM-dep_methyl-trfase"/>
</dbReference>
<dbReference type="InterPro" id="IPR029063">
    <property type="entry name" value="SAM-dependent_MTases_sf"/>
</dbReference>
<dbReference type="InterPro" id="IPR004114">
    <property type="entry name" value="THUMP_dom"/>
</dbReference>
<dbReference type="NCBIfam" id="NF008748">
    <property type="entry name" value="PRK11783.1"/>
    <property type="match status" value="1"/>
</dbReference>
<dbReference type="PANTHER" id="PTHR47313">
    <property type="entry name" value="RIBOSOMAL RNA LARGE SUBUNIT METHYLTRANSFERASE K/L"/>
    <property type="match status" value="1"/>
</dbReference>
<dbReference type="PANTHER" id="PTHR47313:SF1">
    <property type="entry name" value="RIBOSOMAL RNA LARGE SUBUNIT METHYLTRANSFERASE K_L"/>
    <property type="match status" value="1"/>
</dbReference>
<dbReference type="Pfam" id="PF10672">
    <property type="entry name" value="Methyltrans_SAM"/>
    <property type="match status" value="1"/>
</dbReference>
<dbReference type="Pfam" id="PF22020">
    <property type="entry name" value="RlmL_1st"/>
    <property type="match status" value="1"/>
</dbReference>
<dbReference type="Pfam" id="PF02926">
    <property type="entry name" value="THUMP"/>
    <property type="match status" value="1"/>
</dbReference>
<dbReference type="Pfam" id="PF01170">
    <property type="entry name" value="UPF0020"/>
    <property type="match status" value="1"/>
</dbReference>
<dbReference type="PIRSF" id="PIRSF037618">
    <property type="entry name" value="RNA_Mtase_bacteria_prd"/>
    <property type="match status" value="1"/>
</dbReference>
<dbReference type="SMART" id="SM00981">
    <property type="entry name" value="THUMP"/>
    <property type="match status" value="1"/>
</dbReference>
<dbReference type="SUPFAM" id="SSF53335">
    <property type="entry name" value="S-adenosyl-L-methionine-dependent methyltransferases"/>
    <property type="match status" value="2"/>
</dbReference>
<dbReference type="PROSITE" id="PS51165">
    <property type="entry name" value="THUMP"/>
    <property type="match status" value="1"/>
</dbReference>
<dbReference type="PROSITE" id="PS01261">
    <property type="entry name" value="UPF0020"/>
    <property type="match status" value="1"/>
</dbReference>
<accession>Q6LRA0</accession>
<name>RLMKL_PHOPR</name>
<gene>
    <name evidence="1" type="primary">rlmL</name>
    <name type="ordered locus">PBPRA1769</name>
</gene>
<sequence length="712" mass="80413">MNQYLAITSRGLENLLAEELEQLGAQSIQVVHAGVRFKADQSTAYRCCLWTRISSRIIQVLSEFTVRDDMDLYLGAAAINWTEYFSNATRIVVDFNGTNREIRNSQYGAMKVKDAIVDRFTKADLRRPNIDREQPDLRIHMRLSGEKGVLGLDMAGSGLHQRGYRTEAGRAPLRETHAAALVLKSGWTPGQPLLDPMCGSGTLLIEAAMMAADIAPGLKRKRWGFESIKDFDKDAWLEIHAEASVKARRGPAKVQTKFFGFELEHRILAIARDNAGRAGVKELINFQQGDATELKAPEGFDAGIVICNPPYGERLGTTPELISLYTELGNRLKLAFAGSSASIYSGSNELLSCLRMRADKQFKLPNGALDCVLKTYLITAGSVKKEEGEAEGHVEQENVAPDFANRLKKNITKLNKWAKKEGIDCYRIYDADLPNYNAAIDKYNDYLIIQEYAAPKTVPEEIARRRIMDVLRATIEVTGVQTDKVILKVRERQKGKNQYQKLSNAERHIIVNEYGVDLKVNLYDYLDTGLFLDHRITRKMLGDMAKGKDFLNLFAYTGSASVHAACGGAKSTTTIDMSNTYLGWAQENMELNNQVGDQHEFIQADCLQWLQEVDDTFDLIFIDPPTFSNSKRMKQTFDIQRDHIMLMENLKRMLRTDGKIVFSNNKRQFKMDLEKLNELGLDAKNISDKTLPMDFAKNKHIHNSWIITHKED</sequence>
<organism>
    <name type="scientific">Photobacterium profundum (strain SS9)</name>
    <dbReference type="NCBI Taxonomy" id="298386"/>
    <lineage>
        <taxon>Bacteria</taxon>
        <taxon>Pseudomonadati</taxon>
        <taxon>Pseudomonadota</taxon>
        <taxon>Gammaproteobacteria</taxon>
        <taxon>Vibrionales</taxon>
        <taxon>Vibrionaceae</taxon>
        <taxon>Photobacterium</taxon>
    </lineage>
</organism>
<keyword id="KW-0963">Cytoplasm</keyword>
<keyword id="KW-0489">Methyltransferase</keyword>
<keyword id="KW-1185">Reference proteome</keyword>
<keyword id="KW-0694">RNA-binding</keyword>
<keyword id="KW-0698">rRNA processing</keyword>
<keyword id="KW-0949">S-adenosyl-L-methionine</keyword>
<keyword id="KW-0808">Transferase</keyword>